<dbReference type="EC" id="2.8.4.3" evidence="1"/>
<dbReference type="EMBL" id="AP009044">
    <property type="protein sequence ID" value="BAF54773.1"/>
    <property type="molecule type" value="Genomic_DNA"/>
</dbReference>
<dbReference type="RefSeq" id="WP_003857429.1">
    <property type="nucleotide sequence ID" value="NC_009342.1"/>
</dbReference>
<dbReference type="SMR" id="A4QEV7"/>
<dbReference type="KEGG" id="cgt:cgR_1779"/>
<dbReference type="HOGENOM" id="CLU_018697_2_2_11"/>
<dbReference type="PhylomeDB" id="A4QEV7"/>
<dbReference type="Proteomes" id="UP000006698">
    <property type="component" value="Chromosome"/>
</dbReference>
<dbReference type="GO" id="GO:0005829">
    <property type="term" value="C:cytosol"/>
    <property type="evidence" value="ECO:0007669"/>
    <property type="project" value="TreeGrafter"/>
</dbReference>
<dbReference type="GO" id="GO:0051539">
    <property type="term" value="F:4 iron, 4 sulfur cluster binding"/>
    <property type="evidence" value="ECO:0007669"/>
    <property type="project" value="UniProtKB-UniRule"/>
</dbReference>
<dbReference type="GO" id="GO:0046872">
    <property type="term" value="F:metal ion binding"/>
    <property type="evidence" value="ECO:0007669"/>
    <property type="project" value="UniProtKB-KW"/>
</dbReference>
<dbReference type="GO" id="GO:0035597">
    <property type="term" value="F:N6-isopentenyladenosine methylthiotransferase activity"/>
    <property type="evidence" value="ECO:0007669"/>
    <property type="project" value="TreeGrafter"/>
</dbReference>
<dbReference type="CDD" id="cd01335">
    <property type="entry name" value="Radical_SAM"/>
    <property type="match status" value="1"/>
</dbReference>
<dbReference type="FunFam" id="3.40.50.12160:FF:000003">
    <property type="entry name" value="CDK5 regulatory subunit-associated protein 1"/>
    <property type="match status" value="1"/>
</dbReference>
<dbReference type="FunFam" id="3.80.30.20:FF:000001">
    <property type="entry name" value="tRNA-2-methylthio-N(6)-dimethylallyladenosine synthase 2"/>
    <property type="match status" value="1"/>
</dbReference>
<dbReference type="Gene3D" id="3.40.50.12160">
    <property type="entry name" value="Methylthiotransferase, N-terminal domain"/>
    <property type="match status" value="1"/>
</dbReference>
<dbReference type="Gene3D" id="3.80.30.20">
    <property type="entry name" value="tm_1862 like domain"/>
    <property type="match status" value="1"/>
</dbReference>
<dbReference type="HAMAP" id="MF_01864">
    <property type="entry name" value="tRNA_metthiotr_MiaB"/>
    <property type="match status" value="1"/>
</dbReference>
<dbReference type="InterPro" id="IPR006638">
    <property type="entry name" value="Elp3/MiaA/NifB-like_rSAM"/>
</dbReference>
<dbReference type="InterPro" id="IPR005839">
    <property type="entry name" value="Methylthiotransferase"/>
</dbReference>
<dbReference type="InterPro" id="IPR020612">
    <property type="entry name" value="Methylthiotransferase_CS"/>
</dbReference>
<dbReference type="InterPro" id="IPR013848">
    <property type="entry name" value="Methylthiotransferase_N"/>
</dbReference>
<dbReference type="InterPro" id="IPR038135">
    <property type="entry name" value="Methylthiotransferase_N_sf"/>
</dbReference>
<dbReference type="InterPro" id="IPR006463">
    <property type="entry name" value="MiaB_methiolase"/>
</dbReference>
<dbReference type="InterPro" id="IPR007197">
    <property type="entry name" value="rSAM"/>
</dbReference>
<dbReference type="InterPro" id="IPR023404">
    <property type="entry name" value="rSAM_horseshoe"/>
</dbReference>
<dbReference type="InterPro" id="IPR002792">
    <property type="entry name" value="TRAM_dom"/>
</dbReference>
<dbReference type="NCBIfam" id="TIGR01574">
    <property type="entry name" value="miaB-methiolase"/>
    <property type="match status" value="1"/>
</dbReference>
<dbReference type="NCBIfam" id="TIGR00089">
    <property type="entry name" value="MiaB/RimO family radical SAM methylthiotransferase"/>
    <property type="match status" value="1"/>
</dbReference>
<dbReference type="PANTHER" id="PTHR43020">
    <property type="entry name" value="CDK5 REGULATORY SUBUNIT-ASSOCIATED PROTEIN 1"/>
    <property type="match status" value="1"/>
</dbReference>
<dbReference type="PANTHER" id="PTHR43020:SF2">
    <property type="entry name" value="MITOCHONDRIAL TRNA METHYLTHIOTRANSFERASE CDK5RAP1"/>
    <property type="match status" value="1"/>
</dbReference>
<dbReference type="Pfam" id="PF04055">
    <property type="entry name" value="Radical_SAM"/>
    <property type="match status" value="1"/>
</dbReference>
<dbReference type="Pfam" id="PF00919">
    <property type="entry name" value="UPF0004"/>
    <property type="match status" value="1"/>
</dbReference>
<dbReference type="SFLD" id="SFLDF00273">
    <property type="entry name" value="(dimethylallyl)adenosine_tRNA"/>
    <property type="match status" value="1"/>
</dbReference>
<dbReference type="SFLD" id="SFLDG01082">
    <property type="entry name" value="B12-binding_domain_containing"/>
    <property type="match status" value="1"/>
</dbReference>
<dbReference type="SFLD" id="SFLDS00029">
    <property type="entry name" value="Radical_SAM"/>
    <property type="match status" value="1"/>
</dbReference>
<dbReference type="SMART" id="SM00729">
    <property type="entry name" value="Elp3"/>
    <property type="match status" value="1"/>
</dbReference>
<dbReference type="SUPFAM" id="SSF102114">
    <property type="entry name" value="Radical SAM enzymes"/>
    <property type="match status" value="1"/>
</dbReference>
<dbReference type="PROSITE" id="PS51449">
    <property type="entry name" value="MTTASE_N"/>
    <property type="match status" value="1"/>
</dbReference>
<dbReference type="PROSITE" id="PS01278">
    <property type="entry name" value="MTTASE_RADICAL"/>
    <property type="match status" value="1"/>
</dbReference>
<dbReference type="PROSITE" id="PS51918">
    <property type="entry name" value="RADICAL_SAM"/>
    <property type="match status" value="1"/>
</dbReference>
<dbReference type="PROSITE" id="PS50926">
    <property type="entry name" value="TRAM"/>
    <property type="match status" value="1"/>
</dbReference>
<sequence length="526" mass="57391">MTQQLNHAKVNQHPGQATLPETAEGQVRTYEVKTYGCQMNVHDSERLSGLLEEAGYVAAPEDATPDLVVFNTCAVRENADMRLYGTLGNLRSVKEKNPGMQIAVGGCLAQKDKDTVVKKAPWVDVVFGTHNIGSLPTLLQRAEHNAQAEVEIVDSLEQFPSVLPAKRESAYAGWVSVSVGCNNTCTFCIVPSLRGKEQDRRPGDILAEVQALVDQGVTEVTLLGQNVNAYGVNFVDPELERDRSAFSKLLRACGEIEGLERVRFTSPHPAEFTSDVIDAMAETPNICPQLHMPLQSGSDKVLKEMRRSYRSKKFLSILDEVRAKIPHASITTDIIVGFPGETEEDFQATLDVVKKARFTSAYTFQYSPRPGTPAAEYENQLPKEVVQERYERLMVVQEQVCEEENQKLIGTTVELLVQAGGGRKNDATKRMSGRARDGRLVHFAPEGDIDGEIRPGDFVTVTVTEAKPFFLIADSGVQTHRRTKAGDNSAVGQVPTTAPIGVGLGLPQIGAPKVAPATESACCSIN</sequence>
<organism>
    <name type="scientific">Corynebacterium glutamicum (strain R)</name>
    <dbReference type="NCBI Taxonomy" id="340322"/>
    <lineage>
        <taxon>Bacteria</taxon>
        <taxon>Bacillati</taxon>
        <taxon>Actinomycetota</taxon>
        <taxon>Actinomycetes</taxon>
        <taxon>Mycobacteriales</taxon>
        <taxon>Corynebacteriaceae</taxon>
        <taxon>Corynebacterium</taxon>
    </lineage>
</organism>
<feature type="chain" id="PRO_0000374241" description="tRNA-2-methylthio-N(6)-dimethylallyladenosine synthase">
    <location>
        <begin position="1"/>
        <end position="526"/>
    </location>
</feature>
<feature type="domain" description="MTTase N-terminal" evidence="1">
    <location>
        <begin position="28"/>
        <end position="144"/>
    </location>
</feature>
<feature type="domain" description="Radical SAM core" evidence="2">
    <location>
        <begin position="167"/>
        <end position="403"/>
    </location>
</feature>
<feature type="domain" description="TRAM" evidence="1">
    <location>
        <begin position="406"/>
        <end position="477"/>
    </location>
</feature>
<feature type="region of interest" description="Disordered" evidence="3">
    <location>
        <begin position="1"/>
        <end position="24"/>
    </location>
</feature>
<feature type="binding site" evidence="1">
    <location>
        <position position="37"/>
    </location>
    <ligand>
        <name>[4Fe-4S] cluster</name>
        <dbReference type="ChEBI" id="CHEBI:49883"/>
        <label>1</label>
    </ligand>
</feature>
<feature type="binding site" evidence="1">
    <location>
        <position position="73"/>
    </location>
    <ligand>
        <name>[4Fe-4S] cluster</name>
        <dbReference type="ChEBI" id="CHEBI:49883"/>
        <label>1</label>
    </ligand>
</feature>
<feature type="binding site" evidence="1">
    <location>
        <position position="107"/>
    </location>
    <ligand>
        <name>[4Fe-4S] cluster</name>
        <dbReference type="ChEBI" id="CHEBI:49883"/>
        <label>1</label>
    </ligand>
</feature>
<feature type="binding site" evidence="1">
    <location>
        <position position="181"/>
    </location>
    <ligand>
        <name>[4Fe-4S] cluster</name>
        <dbReference type="ChEBI" id="CHEBI:49883"/>
        <label>2</label>
        <note>4Fe-4S-S-AdoMet</note>
    </ligand>
</feature>
<feature type="binding site" evidence="1">
    <location>
        <position position="185"/>
    </location>
    <ligand>
        <name>[4Fe-4S] cluster</name>
        <dbReference type="ChEBI" id="CHEBI:49883"/>
        <label>2</label>
        <note>4Fe-4S-S-AdoMet</note>
    </ligand>
</feature>
<feature type="binding site" evidence="1">
    <location>
        <position position="188"/>
    </location>
    <ligand>
        <name>[4Fe-4S] cluster</name>
        <dbReference type="ChEBI" id="CHEBI:49883"/>
        <label>2</label>
        <note>4Fe-4S-S-AdoMet</note>
    </ligand>
</feature>
<name>MIAB_CORGB</name>
<evidence type="ECO:0000255" key="1">
    <source>
        <dbReference type="HAMAP-Rule" id="MF_01864"/>
    </source>
</evidence>
<evidence type="ECO:0000255" key="2">
    <source>
        <dbReference type="PROSITE-ProRule" id="PRU01266"/>
    </source>
</evidence>
<evidence type="ECO:0000256" key="3">
    <source>
        <dbReference type="SAM" id="MobiDB-lite"/>
    </source>
</evidence>
<protein>
    <recommendedName>
        <fullName evidence="1">tRNA-2-methylthio-N(6)-dimethylallyladenosine synthase</fullName>
        <ecNumber evidence="1">2.8.4.3</ecNumber>
    </recommendedName>
    <alternativeName>
        <fullName evidence="1">(Dimethylallyl)adenosine tRNA methylthiotransferase MiaB</fullName>
    </alternativeName>
    <alternativeName>
        <fullName evidence="1">tRNA-i(6)A37 methylthiotransferase</fullName>
    </alternativeName>
</protein>
<gene>
    <name evidence="1" type="primary">miaB</name>
    <name type="ordered locus">cgR_1779</name>
</gene>
<keyword id="KW-0004">4Fe-4S</keyword>
<keyword id="KW-0963">Cytoplasm</keyword>
<keyword id="KW-0408">Iron</keyword>
<keyword id="KW-0411">Iron-sulfur</keyword>
<keyword id="KW-0479">Metal-binding</keyword>
<keyword id="KW-0949">S-adenosyl-L-methionine</keyword>
<keyword id="KW-0808">Transferase</keyword>
<keyword id="KW-0819">tRNA processing</keyword>
<comment type="function">
    <text evidence="1">Catalyzes the methylthiolation of N6-(dimethylallyl)adenosine (i(6)A), leading to the formation of 2-methylthio-N6-(dimethylallyl)adenosine (ms(2)i(6)A) at position 37 in tRNAs that read codons beginning with uridine.</text>
</comment>
<comment type="catalytic activity">
    <reaction evidence="1">
        <text>N(6)-dimethylallyladenosine(37) in tRNA + (sulfur carrier)-SH + AH2 + 2 S-adenosyl-L-methionine = 2-methylsulfanyl-N(6)-dimethylallyladenosine(37) in tRNA + (sulfur carrier)-H + 5'-deoxyadenosine + L-methionine + A + S-adenosyl-L-homocysteine + 2 H(+)</text>
        <dbReference type="Rhea" id="RHEA:37067"/>
        <dbReference type="Rhea" id="RHEA-COMP:10375"/>
        <dbReference type="Rhea" id="RHEA-COMP:10376"/>
        <dbReference type="Rhea" id="RHEA-COMP:14737"/>
        <dbReference type="Rhea" id="RHEA-COMP:14739"/>
        <dbReference type="ChEBI" id="CHEBI:13193"/>
        <dbReference type="ChEBI" id="CHEBI:15378"/>
        <dbReference type="ChEBI" id="CHEBI:17319"/>
        <dbReference type="ChEBI" id="CHEBI:17499"/>
        <dbReference type="ChEBI" id="CHEBI:29917"/>
        <dbReference type="ChEBI" id="CHEBI:57844"/>
        <dbReference type="ChEBI" id="CHEBI:57856"/>
        <dbReference type="ChEBI" id="CHEBI:59789"/>
        <dbReference type="ChEBI" id="CHEBI:64428"/>
        <dbReference type="ChEBI" id="CHEBI:74415"/>
        <dbReference type="ChEBI" id="CHEBI:74417"/>
        <dbReference type="EC" id="2.8.4.3"/>
    </reaction>
</comment>
<comment type="cofactor">
    <cofactor evidence="1">
        <name>[4Fe-4S] cluster</name>
        <dbReference type="ChEBI" id="CHEBI:49883"/>
    </cofactor>
    <text evidence="1">Binds 2 [4Fe-4S] clusters. One cluster is coordinated with 3 cysteines and an exchangeable S-adenosyl-L-methionine.</text>
</comment>
<comment type="subunit">
    <text evidence="1">Monomer.</text>
</comment>
<comment type="subcellular location">
    <subcellularLocation>
        <location evidence="1">Cytoplasm</location>
    </subcellularLocation>
</comment>
<comment type="similarity">
    <text evidence="1">Belongs to the methylthiotransferase family. MiaB subfamily.</text>
</comment>
<accession>A4QEV7</accession>
<reference key="1">
    <citation type="journal article" date="2007" name="Microbiology">
        <title>Comparative analysis of the Corynebacterium glutamicum group and complete genome sequence of strain R.</title>
        <authorList>
            <person name="Yukawa H."/>
            <person name="Omumasaba C.A."/>
            <person name="Nonaka H."/>
            <person name="Kos P."/>
            <person name="Okai N."/>
            <person name="Suzuki N."/>
            <person name="Suda M."/>
            <person name="Tsuge Y."/>
            <person name="Watanabe J."/>
            <person name="Ikeda Y."/>
            <person name="Vertes A.A."/>
            <person name="Inui M."/>
        </authorList>
    </citation>
    <scope>NUCLEOTIDE SEQUENCE [LARGE SCALE GENOMIC DNA]</scope>
    <source>
        <strain>R</strain>
    </source>
</reference>
<proteinExistence type="inferred from homology"/>